<dbReference type="EMBL" id="CP000091">
    <property type="protein sequence ID" value="AAZ64534.1"/>
    <property type="molecule type" value="Genomic_DNA"/>
</dbReference>
<dbReference type="SMR" id="Q46QQ0"/>
<dbReference type="STRING" id="264198.Reut_B5188"/>
<dbReference type="KEGG" id="reu:Reut_B5188"/>
<dbReference type="eggNOG" id="COG0361">
    <property type="taxonomic scope" value="Bacteria"/>
</dbReference>
<dbReference type="HOGENOM" id="CLU_151267_1_0_4"/>
<dbReference type="OrthoDB" id="9803250at2"/>
<dbReference type="GO" id="GO:0005829">
    <property type="term" value="C:cytosol"/>
    <property type="evidence" value="ECO:0007669"/>
    <property type="project" value="TreeGrafter"/>
</dbReference>
<dbReference type="GO" id="GO:0043022">
    <property type="term" value="F:ribosome binding"/>
    <property type="evidence" value="ECO:0007669"/>
    <property type="project" value="UniProtKB-UniRule"/>
</dbReference>
<dbReference type="GO" id="GO:0019843">
    <property type="term" value="F:rRNA binding"/>
    <property type="evidence" value="ECO:0007669"/>
    <property type="project" value="UniProtKB-UniRule"/>
</dbReference>
<dbReference type="GO" id="GO:0003743">
    <property type="term" value="F:translation initiation factor activity"/>
    <property type="evidence" value="ECO:0007669"/>
    <property type="project" value="UniProtKB-UniRule"/>
</dbReference>
<dbReference type="CDD" id="cd04451">
    <property type="entry name" value="S1_IF1"/>
    <property type="match status" value="1"/>
</dbReference>
<dbReference type="FunFam" id="2.40.50.140:FF:000002">
    <property type="entry name" value="Translation initiation factor IF-1"/>
    <property type="match status" value="1"/>
</dbReference>
<dbReference type="Gene3D" id="2.40.50.140">
    <property type="entry name" value="Nucleic acid-binding proteins"/>
    <property type="match status" value="1"/>
</dbReference>
<dbReference type="HAMAP" id="MF_00075">
    <property type="entry name" value="IF_1"/>
    <property type="match status" value="1"/>
</dbReference>
<dbReference type="InterPro" id="IPR012340">
    <property type="entry name" value="NA-bd_OB-fold"/>
</dbReference>
<dbReference type="InterPro" id="IPR006196">
    <property type="entry name" value="RNA-binding_domain_S1_IF1"/>
</dbReference>
<dbReference type="InterPro" id="IPR004368">
    <property type="entry name" value="TIF_IF1"/>
</dbReference>
<dbReference type="NCBIfam" id="TIGR00008">
    <property type="entry name" value="infA"/>
    <property type="match status" value="1"/>
</dbReference>
<dbReference type="PANTHER" id="PTHR33370">
    <property type="entry name" value="TRANSLATION INITIATION FACTOR IF-1, CHLOROPLASTIC"/>
    <property type="match status" value="1"/>
</dbReference>
<dbReference type="PANTHER" id="PTHR33370:SF1">
    <property type="entry name" value="TRANSLATION INITIATION FACTOR IF-1, CHLOROPLASTIC"/>
    <property type="match status" value="1"/>
</dbReference>
<dbReference type="Pfam" id="PF01176">
    <property type="entry name" value="eIF-1a"/>
    <property type="match status" value="1"/>
</dbReference>
<dbReference type="SUPFAM" id="SSF50249">
    <property type="entry name" value="Nucleic acid-binding proteins"/>
    <property type="match status" value="1"/>
</dbReference>
<dbReference type="PROSITE" id="PS50832">
    <property type="entry name" value="S1_IF1_TYPE"/>
    <property type="match status" value="1"/>
</dbReference>
<sequence length="73" mass="8562">MAKEELVEFGGKVSEVLPDNRFRVTLENGFEVWAYSSGRLKRNRIRILAGDRVTLEMSPYDLTKGRINYRHKF</sequence>
<protein>
    <recommendedName>
        <fullName evidence="1">Translation initiation factor IF-1 2</fullName>
    </recommendedName>
</protein>
<accession>Q46QQ0</accession>
<gene>
    <name evidence="1" type="primary">infA2</name>
    <name type="ordered locus">Reut_B5188</name>
</gene>
<name>IF12_CUPPJ</name>
<comment type="function">
    <text evidence="1">One of the essential components for the initiation of protein synthesis. Stabilizes the binding of IF-2 and IF-3 on the 30S subunit to which N-formylmethionyl-tRNA(fMet) subsequently binds. Helps modulate mRNA selection, yielding the 30S pre-initiation complex (PIC). Upon addition of the 50S ribosomal subunit IF-1, IF-2 and IF-3 are released leaving the mature 70S translation initiation complex.</text>
</comment>
<comment type="subunit">
    <text evidence="1">Component of the 30S ribosomal translation pre-initiation complex which assembles on the 30S ribosome in the order IF-2 and IF-3, IF-1 and N-formylmethionyl-tRNA(fMet); mRNA recruitment can occur at any time during PIC assembly.</text>
</comment>
<comment type="subcellular location">
    <subcellularLocation>
        <location evidence="1">Cytoplasm</location>
    </subcellularLocation>
</comment>
<comment type="similarity">
    <text evidence="1">Belongs to the IF-1 family.</text>
</comment>
<keyword id="KW-0963">Cytoplasm</keyword>
<keyword id="KW-0396">Initiation factor</keyword>
<keyword id="KW-0648">Protein biosynthesis</keyword>
<keyword id="KW-0694">RNA-binding</keyword>
<keyword id="KW-0699">rRNA-binding</keyword>
<organism>
    <name type="scientific">Cupriavidus pinatubonensis (strain JMP 134 / LMG 1197)</name>
    <name type="common">Cupriavidus necator (strain JMP 134)</name>
    <dbReference type="NCBI Taxonomy" id="264198"/>
    <lineage>
        <taxon>Bacteria</taxon>
        <taxon>Pseudomonadati</taxon>
        <taxon>Pseudomonadota</taxon>
        <taxon>Betaproteobacteria</taxon>
        <taxon>Burkholderiales</taxon>
        <taxon>Burkholderiaceae</taxon>
        <taxon>Cupriavidus</taxon>
    </lineage>
</organism>
<evidence type="ECO:0000255" key="1">
    <source>
        <dbReference type="HAMAP-Rule" id="MF_00075"/>
    </source>
</evidence>
<reference key="1">
    <citation type="journal article" date="2010" name="PLoS ONE">
        <title>The complete multipartite genome sequence of Cupriavidus necator JMP134, a versatile pollutant degrader.</title>
        <authorList>
            <person name="Lykidis A."/>
            <person name="Perez-Pantoja D."/>
            <person name="Ledger T."/>
            <person name="Mavromatis K."/>
            <person name="Anderson I.J."/>
            <person name="Ivanova N.N."/>
            <person name="Hooper S.D."/>
            <person name="Lapidus A."/>
            <person name="Lucas S."/>
            <person name="Gonzalez B."/>
            <person name="Kyrpides N.C."/>
        </authorList>
    </citation>
    <scope>NUCLEOTIDE SEQUENCE [LARGE SCALE GENOMIC DNA]</scope>
    <source>
        <strain>JMP134 / LMG 1197</strain>
    </source>
</reference>
<proteinExistence type="inferred from homology"/>
<feature type="chain" id="PRO_0000263847" description="Translation initiation factor IF-1 2">
    <location>
        <begin position="1"/>
        <end position="73"/>
    </location>
</feature>
<feature type="domain" description="S1-like" evidence="1">
    <location>
        <begin position="1"/>
        <end position="72"/>
    </location>
</feature>